<keyword id="KW-0067">ATP-binding</keyword>
<keyword id="KW-1003">Cell membrane</keyword>
<keyword id="KW-1015">Disulfide bond</keyword>
<keyword id="KW-0245">EGF-like domain</keyword>
<keyword id="KW-0325">Glycoprotein</keyword>
<keyword id="KW-0418">Kinase</keyword>
<keyword id="KW-0430">Lectin</keyword>
<keyword id="KW-0472">Membrane</keyword>
<keyword id="KW-0547">Nucleotide-binding</keyword>
<keyword id="KW-0597">Phosphoprotein</keyword>
<keyword id="KW-0675">Receptor</keyword>
<keyword id="KW-1185">Reference proteome</keyword>
<keyword id="KW-0723">Serine/threonine-protein kinase</keyword>
<keyword id="KW-0732">Signal</keyword>
<keyword id="KW-0808">Transferase</keyword>
<keyword id="KW-0812">Transmembrane</keyword>
<keyword id="KW-1133">Transmembrane helix</keyword>
<evidence type="ECO:0000250" key="1"/>
<evidence type="ECO:0000250" key="2">
    <source>
        <dbReference type="UniProtKB" id="Q9LPZ9"/>
    </source>
</evidence>
<evidence type="ECO:0000255" key="3"/>
<evidence type="ECO:0000255" key="4">
    <source>
        <dbReference type="PROSITE-ProRule" id="PRU00038"/>
    </source>
</evidence>
<evidence type="ECO:0000255" key="5">
    <source>
        <dbReference type="PROSITE-ProRule" id="PRU00159"/>
    </source>
</evidence>
<evidence type="ECO:0000255" key="6">
    <source>
        <dbReference type="PROSITE-ProRule" id="PRU00315"/>
    </source>
</evidence>
<evidence type="ECO:0000255" key="7">
    <source>
        <dbReference type="PROSITE-ProRule" id="PRU10027"/>
    </source>
</evidence>
<evidence type="ECO:0000305" key="8"/>
<protein>
    <recommendedName>
        <fullName>G-type lectin S-receptor-like serine/threonine-protein kinase At1g61440</fullName>
        <ecNumber>2.7.11.1</ecNumber>
    </recommendedName>
</protein>
<comment type="catalytic activity">
    <reaction>
        <text>L-seryl-[protein] + ATP = O-phospho-L-seryl-[protein] + ADP + H(+)</text>
        <dbReference type="Rhea" id="RHEA:17989"/>
        <dbReference type="Rhea" id="RHEA-COMP:9863"/>
        <dbReference type="Rhea" id="RHEA-COMP:11604"/>
        <dbReference type="ChEBI" id="CHEBI:15378"/>
        <dbReference type="ChEBI" id="CHEBI:29999"/>
        <dbReference type="ChEBI" id="CHEBI:30616"/>
        <dbReference type="ChEBI" id="CHEBI:83421"/>
        <dbReference type="ChEBI" id="CHEBI:456216"/>
        <dbReference type="EC" id="2.7.11.1"/>
    </reaction>
</comment>
<comment type="catalytic activity">
    <reaction>
        <text>L-threonyl-[protein] + ATP = O-phospho-L-threonyl-[protein] + ADP + H(+)</text>
        <dbReference type="Rhea" id="RHEA:46608"/>
        <dbReference type="Rhea" id="RHEA-COMP:11060"/>
        <dbReference type="Rhea" id="RHEA-COMP:11605"/>
        <dbReference type="ChEBI" id="CHEBI:15378"/>
        <dbReference type="ChEBI" id="CHEBI:30013"/>
        <dbReference type="ChEBI" id="CHEBI:30616"/>
        <dbReference type="ChEBI" id="CHEBI:61977"/>
        <dbReference type="ChEBI" id="CHEBI:456216"/>
        <dbReference type="EC" id="2.7.11.1"/>
    </reaction>
</comment>
<comment type="subcellular location">
    <subcellularLocation>
        <location evidence="1">Cell membrane</location>
        <topology evidence="1">Single-pass type I membrane protein</topology>
    </subcellularLocation>
</comment>
<comment type="similarity">
    <text evidence="5">Belongs to the protein kinase superfamily. Ser/Thr protein kinase family.</text>
</comment>
<comment type="sequence caution" evidence="8">
    <conflict type="erroneous gene model prediction">
        <sequence resource="EMBL-CDS" id="AAC13897"/>
    </conflict>
</comment>
<sequence>MGKKRIVLLLFISFSYAEITKESPLSIGQTLSSSNGVYELGFFSFNNSQNQYVGIWFKGIIPRVVVWVANREKPVTDSAANLVISSSGSLLLINGKHDVVWSTGEISASKGSHAELSDYGNLMVKDNVTGRTLWESFEHLGNTLLPLSTMMYNLVTGEKRGLSSWKSYTDPSPGDFWVQITPQVPSQGFVMRGSTPYYRTGPWAKTRYTGIPQMDESYTSPFSLHQDVNGSGYFSYFERDYKLSRIMLTSEGSMKVLRYNGLDWKSSYEGPANSCDIYGVCGPFGFCVISDPPKCKCFKGFVPKSIEEWKRGNWTSGCARRTELHCQGNSTGKDANVFHTVPNIKPPDFYEYANSVDAEGCYQSCLHNCSCLAFAYIPGIGCLMWSKDLMDTMQFSAGGEILSIRLAHSELDVHKRKMTIVASTVSLTLFVILGFATFGFWRNRVKHHDAWRNDLQSQDVPGLEFFEMNTIQTATSNFSLSNKLGHGGFGSVYKGKLQDGREIAVKRLSSSSEQGKQEFMNEIVLISKLQHRNLVRVLGCCVEGKEKLLIYEFMKNKSLDTFVFGSRKRLELDWPKRFDIIQGIVRGLLYLHRDSRLRVIHRDLKVSNILLDEKMNPKISDFGLARLFQGSQYQDKTRRVVGTLGYMSPEYAWTGVFSEKSDIYSFGVLLLEIISGEKISRFSYGEEGKALLAYVWECWCETRGVNLLDQALDDSSHPAEVGRCVQIGLLCVQHQPADRPNTLELLSMLTTTSDLPLPKQPTFAVHTRNDEPPSNDLMITVNEMTESVILGR</sequence>
<dbReference type="EC" id="2.7.11.1"/>
<dbReference type="EMBL" id="AC004255">
    <property type="protein sequence ID" value="AAC13897.1"/>
    <property type="status" value="ALT_SEQ"/>
    <property type="molecule type" value="Genomic_DNA"/>
</dbReference>
<dbReference type="EMBL" id="CP002684">
    <property type="protein sequence ID" value="AEE33838.1"/>
    <property type="molecule type" value="Genomic_DNA"/>
</dbReference>
<dbReference type="RefSeq" id="NP_176339.1">
    <property type="nucleotide sequence ID" value="NM_104825.2"/>
</dbReference>
<dbReference type="SMR" id="O64776"/>
<dbReference type="STRING" id="3702.O64776"/>
<dbReference type="GlyGen" id="O64776">
    <property type="glycosylation" value="6 sites"/>
</dbReference>
<dbReference type="PaxDb" id="3702-AT1G61440.1"/>
<dbReference type="ProteomicsDB" id="243047"/>
<dbReference type="EnsemblPlants" id="AT1G61440.1">
    <property type="protein sequence ID" value="AT1G61440.1"/>
    <property type="gene ID" value="AT1G61440"/>
</dbReference>
<dbReference type="GeneID" id="842438"/>
<dbReference type="Gramene" id="AT1G61440.1">
    <property type="protein sequence ID" value="AT1G61440.1"/>
    <property type="gene ID" value="AT1G61440"/>
</dbReference>
<dbReference type="KEGG" id="ath:AT1G61440"/>
<dbReference type="Araport" id="AT1G61440"/>
<dbReference type="TAIR" id="AT1G61440"/>
<dbReference type="HOGENOM" id="CLU_000288_116_7_1"/>
<dbReference type="InParanoid" id="O64776"/>
<dbReference type="PhylomeDB" id="O64776"/>
<dbReference type="PRO" id="PR:O64776"/>
<dbReference type="Proteomes" id="UP000006548">
    <property type="component" value="Chromosome 1"/>
</dbReference>
<dbReference type="ExpressionAtlas" id="O64776">
    <property type="expression patterns" value="baseline and differential"/>
</dbReference>
<dbReference type="GO" id="GO:0005886">
    <property type="term" value="C:plasma membrane"/>
    <property type="evidence" value="ECO:0007669"/>
    <property type="project" value="UniProtKB-SubCell"/>
</dbReference>
<dbReference type="GO" id="GO:0005524">
    <property type="term" value="F:ATP binding"/>
    <property type="evidence" value="ECO:0007669"/>
    <property type="project" value="UniProtKB-KW"/>
</dbReference>
<dbReference type="GO" id="GO:0005516">
    <property type="term" value="F:calmodulin binding"/>
    <property type="evidence" value="ECO:0000250"/>
    <property type="project" value="UniProtKB"/>
</dbReference>
<dbReference type="GO" id="GO:0030246">
    <property type="term" value="F:carbohydrate binding"/>
    <property type="evidence" value="ECO:0007669"/>
    <property type="project" value="UniProtKB-KW"/>
</dbReference>
<dbReference type="GO" id="GO:0106310">
    <property type="term" value="F:protein serine kinase activity"/>
    <property type="evidence" value="ECO:0007669"/>
    <property type="project" value="RHEA"/>
</dbReference>
<dbReference type="GO" id="GO:0004674">
    <property type="term" value="F:protein serine/threonine kinase activity"/>
    <property type="evidence" value="ECO:0000250"/>
    <property type="project" value="UniProtKB"/>
</dbReference>
<dbReference type="GO" id="GO:0031625">
    <property type="term" value="F:ubiquitin protein ligase binding"/>
    <property type="evidence" value="ECO:0007669"/>
    <property type="project" value="UniProtKB-ARBA"/>
</dbReference>
<dbReference type="GO" id="GO:0048544">
    <property type="term" value="P:recognition of pollen"/>
    <property type="evidence" value="ECO:0007669"/>
    <property type="project" value="InterPro"/>
</dbReference>
<dbReference type="CDD" id="cd00028">
    <property type="entry name" value="B_lectin"/>
    <property type="match status" value="1"/>
</dbReference>
<dbReference type="CDD" id="cd01098">
    <property type="entry name" value="PAN_AP_plant"/>
    <property type="match status" value="1"/>
</dbReference>
<dbReference type="CDD" id="cd14066">
    <property type="entry name" value="STKc_IRAK"/>
    <property type="match status" value="1"/>
</dbReference>
<dbReference type="FunFam" id="1.10.510.10:FF:000345">
    <property type="entry name" value="G-type lectin S-receptor-like serine/threonine-protein kinase"/>
    <property type="match status" value="1"/>
</dbReference>
<dbReference type="FunFam" id="2.90.10.10:FF:000003">
    <property type="entry name" value="G-type lectin S-receptor-like serine/threonine-protein kinase"/>
    <property type="match status" value="1"/>
</dbReference>
<dbReference type="FunFam" id="3.30.200.20:FF:000401">
    <property type="entry name" value="G-type lectin S-receptor-like serine/threonine-protein kinase SD1-29"/>
    <property type="match status" value="1"/>
</dbReference>
<dbReference type="Gene3D" id="2.90.10.10">
    <property type="entry name" value="Bulb-type lectin domain"/>
    <property type="match status" value="1"/>
</dbReference>
<dbReference type="Gene3D" id="3.30.200.20">
    <property type="entry name" value="Phosphorylase Kinase, domain 1"/>
    <property type="match status" value="1"/>
</dbReference>
<dbReference type="Gene3D" id="1.10.510.10">
    <property type="entry name" value="Transferase(Phosphotransferase) domain 1"/>
    <property type="match status" value="1"/>
</dbReference>
<dbReference type="InterPro" id="IPR001480">
    <property type="entry name" value="Bulb-type_lectin_dom"/>
</dbReference>
<dbReference type="InterPro" id="IPR036426">
    <property type="entry name" value="Bulb-type_lectin_dom_sf"/>
</dbReference>
<dbReference type="InterPro" id="IPR011009">
    <property type="entry name" value="Kinase-like_dom_sf"/>
</dbReference>
<dbReference type="InterPro" id="IPR003609">
    <property type="entry name" value="Pan_app"/>
</dbReference>
<dbReference type="InterPro" id="IPR000719">
    <property type="entry name" value="Prot_kinase_dom"/>
</dbReference>
<dbReference type="InterPro" id="IPR017441">
    <property type="entry name" value="Protein_kinase_ATP_BS"/>
</dbReference>
<dbReference type="InterPro" id="IPR021820">
    <property type="entry name" value="S-locus_recpt_kinase_C"/>
</dbReference>
<dbReference type="InterPro" id="IPR000858">
    <property type="entry name" value="S_locus_glycoprot_dom"/>
</dbReference>
<dbReference type="InterPro" id="IPR001245">
    <property type="entry name" value="Ser-Thr/Tyr_kinase_cat_dom"/>
</dbReference>
<dbReference type="InterPro" id="IPR008271">
    <property type="entry name" value="Ser/Thr_kinase_AS"/>
</dbReference>
<dbReference type="InterPro" id="IPR024171">
    <property type="entry name" value="SRK-like_kinase"/>
</dbReference>
<dbReference type="PANTHER" id="PTHR27002:SF506">
    <property type="entry name" value="ATP BINDING _ PROTEIN KINASE"/>
    <property type="match status" value="1"/>
</dbReference>
<dbReference type="PANTHER" id="PTHR27002">
    <property type="entry name" value="RECEPTOR-LIKE SERINE/THREONINE-PROTEIN KINASE SD1-8"/>
    <property type="match status" value="1"/>
</dbReference>
<dbReference type="Pfam" id="PF01453">
    <property type="entry name" value="B_lectin"/>
    <property type="match status" value="1"/>
</dbReference>
<dbReference type="Pfam" id="PF11883">
    <property type="entry name" value="DUF3403"/>
    <property type="match status" value="1"/>
</dbReference>
<dbReference type="Pfam" id="PF08276">
    <property type="entry name" value="PAN_2"/>
    <property type="match status" value="1"/>
</dbReference>
<dbReference type="Pfam" id="PF07714">
    <property type="entry name" value="PK_Tyr_Ser-Thr"/>
    <property type="match status" value="1"/>
</dbReference>
<dbReference type="Pfam" id="PF00954">
    <property type="entry name" value="S_locus_glycop"/>
    <property type="match status" value="1"/>
</dbReference>
<dbReference type="PIRSF" id="PIRSF000641">
    <property type="entry name" value="SRK"/>
    <property type="match status" value="1"/>
</dbReference>
<dbReference type="SMART" id="SM00108">
    <property type="entry name" value="B_lectin"/>
    <property type="match status" value="1"/>
</dbReference>
<dbReference type="SMART" id="SM00473">
    <property type="entry name" value="PAN_AP"/>
    <property type="match status" value="1"/>
</dbReference>
<dbReference type="SMART" id="SM00220">
    <property type="entry name" value="S_TKc"/>
    <property type="match status" value="1"/>
</dbReference>
<dbReference type="SUPFAM" id="SSF51110">
    <property type="entry name" value="alpha-D-mannose-specific plant lectins"/>
    <property type="match status" value="1"/>
</dbReference>
<dbReference type="SUPFAM" id="SSF56112">
    <property type="entry name" value="Protein kinase-like (PK-like)"/>
    <property type="match status" value="1"/>
</dbReference>
<dbReference type="PROSITE" id="PS50927">
    <property type="entry name" value="BULB_LECTIN"/>
    <property type="match status" value="1"/>
</dbReference>
<dbReference type="PROSITE" id="PS50948">
    <property type="entry name" value="PAN"/>
    <property type="match status" value="1"/>
</dbReference>
<dbReference type="PROSITE" id="PS00107">
    <property type="entry name" value="PROTEIN_KINASE_ATP"/>
    <property type="match status" value="1"/>
</dbReference>
<dbReference type="PROSITE" id="PS50011">
    <property type="entry name" value="PROTEIN_KINASE_DOM"/>
    <property type="match status" value="1"/>
</dbReference>
<dbReference type="PROSITE" id="PS00108">
    <property type="entry name" value="PROTEIN_KINASE_ST"/>
    <property type="match status" value="1"/>
</dbReference>
<reference key="1">
    <citation type="journal article" date="2000" name="Nature">
        <title>Sequence and analysis of chromosome 1 of the plant Arabidopsis thaliana.</title>
        <authorList>
            <person name="Theologis A."/>
            <person name="Ecker J.R."/>
            <person name="Palm C.J."/>
            <person name="Federspiel N.A."/>
            <person name="Kaul S."/>
            <person name="White O."/>
            <person name="Alonso J."/>
            <person name="Altafi H."/>
            <person name="Araujo R."/>
            <person name="Bowman C.L."/>
            <person name="Brooks S.Y."/>
            <person name="Buehler E."/>
            <person name="Chan A."/>
            <person name="Chao Q."/>
            <person name="Chen H."/>
            <person name="Cheuk R.F."/>
            <person name="Chin C.W."/>
            <person name="Chung M.K."/>
            <person name="Conn L."/>
            <person name="Conway A.B."/>
            <person name="Conway A.R."/>
            <person name="Creasy T.H."/>
            <person name="Dewar K."/>
            <person name="Dunn P."/>
            <person name="Etgu P."/>
            <person name="Feldblyum T.V."/>
            <person name="Feng J.-D."/>
            <person name="Fong B."/>
            <person name="Fujii C.Y."/>
            <person name="Gill J.E."/>
            <person name="Goldsmith A.D."/>
            <person name="Haas B."/>
            <person name="Hansen N.F."/>
            <person name="Hughes B."/>
            <person name="Huizar L."/>
            <person name="Hunter J.L."/>
            <person name="Jenkins J."/>
            <person name="Johnson-Hopson C."/>
            <person name="Khan S."/>
            <person name="Khaykin E."/>
            <person name="Kim C.J."/>
            <person name="Koo H.L."/>
            <person name="Kremenetskaia I."/>
            <person name="Kurtz D.B."/>
            <person name="Kwan A."/>
            <person name="Lam B."/>
            <person name="Langin-Hooper S."/>
            <person name="Lee A."/>
            <person name="Lee J.M."/>
            <person name="Lenz C.A."/>
            <person name="Li J.H."/>
            <person name="Li Y.-P."/>
            <person name="Lin X."/>
            <person name="Liu S.X."/>
            <person name="Liu Z.A."/>
            <person name="Luros J.S."/>
            <person name="Maiti R."/>
            <person name="Marziali A."/>
            <person name="Militscher J."/>
            <person name="Miranda M."/>
            <person name="Nguyen M."/>
            <person name="Nierman W.C."/>
            <person name="Osborne B.I."/>
            <person name="Pai G."/>
            <person name="Peterson J."/>
            <person name="Pham P.K."/>
            <person name="Rizzo M."/>
            <person name="Rooney T."/>
            <person name="Rowley D."/>
            <person name="Sakano H."/>
            <person name="Salzberg S.L."/>
            <person name="Schwartz J.R."/>
            <person name="Shinn P."/>
            <person name="Southwick A.M."/>
            <person name="Sun H."/>
            <person name="Tallon L.J."/>
            <person name="Tambunga G."/>
            <person name="Toriumi M.J."/>
            <person name="Town C.D."/>
            <person name="Utterback T."/>
            <person name="Van Aken S."/>
            <person name="Vaysberg M."/>
            <person name="Vysotskaia V.S."/>
            <person name="Walker M."/>
            <person name="Wu D."/>
            <person name="Yu G."/>
            <person name="Fraser C.M."/>
            <person name="Venter J.C."/>
            <person name="Davis R.W."/>
        </authorList>
    </citation>
    <scope>NUCLEOTIDE SEQUENCE [LARGE SCALE GENOMIC DNA]</scope>
    <source>
        <strain>cv. Columbia</strain>
    </source>
</reference>
<reference key="2">
    <citation type="journal article" date="2017" name="Plant J.">
        <title>Araport11: a complete reannotation of the Arabidopsis thaliana reference genome.</title>
        <authorList>
            <person name="Cheng C.Y."/>
            <person name="Krishnakumar V."/>
            <person name="Chan A.P."/>
            <person name="Thibaud-Nissen F."/>
            <person name="Schobel S."/>
            <person name="Town C.D."/>
        </authorList>
    </citation>
    <scope>GENOME REANNOTATION</scope>
    <source>
        <strain>cv. Columbia</strain>
    </source>
</reference>
<feature type="signal peptide" evidence="3">
    <location>
        <begin position="1"/>
        <end position="17"/>
    </location>
</feature>
<feature type="chain" id="PRO_0000401312" description="G-type lectin S-receptor-like serine/threonine-protein kinase At1g61440">
    <location>
        <begin position="18"/>
        <end position="792"/>
    </location>
</feature>
<feature type="topological domain" description="Extracellular" evidence="3">
    <location>
        <begin position="18"/>
        <end position="419"/>
    </location>
</feature>
<feature type="transmembrane region" description="Helical" evidence="3">
    <location>
        <begin position="420"/>
        <end position="440"/>
    </location>
</feature>
<feature type="topological domain" description="Cytoplasmic" evidence="3">
    <location>
        <begin position="441"/>
        <end position="792"/>
    </location>
</feature>
<feature type="domain" description="Bulb-type lectin" evidence="4">
    <location>
        <begin position="18"/>
        <end position="137"/>
    </location>
</feature>
<feature type="domain" description="EGF-like; atypical">
    <location>
        <begin position="271"/>
        <end position="307"/>
    </location>
</feature>
<feature type="domain" description="PAN" evidence="6">
    <location>
        <begin position="326"/>
        <end position="408"/>
    </location>
</feature>
<feature type="domain" description="Protein kinase" evidence="5">
    <location>
        <begin position="478"/>
        <end position="763"/>
    </location>
</feature>
<feature type="region of interest" description="CaM-binding" evidence="1">
    <location>
        <begin position="567"/>
        <end position="584"/>
    </location>
</feature>
<feature type="active site" description="Proton acceptor" evidence="5 7">
    <location>
        <position position="603"/>
    </location>
</feature>
<feature type="binding site" evidence="5">
    <location>
        <begin position="484"/>
        <end position="492"/>
    </location>
    <ligand>
        <name>ATP</name>
        <dbReference type="ChEBI" id="CHEBI:30616"/>
    </ligand>
</feature>
<feature type="binding site" evidence="5">
    <location>
        <position position="506"/>
    </location>
    <ligand>
        <name>ATP</name>
        <dbReference type="ChEBI" id="CHEBI:30616"/>
    </ligand>
</feature>
<feature type="modified residue" description="Phosphoserine" evidence="2">
    <location>
        <position position="512"/>
    </location>
</feature>
<feature type="modified residue" description="Phosphoserine" evidence="2">
    <location>
        <position position="527"/>
    </location>
</feature>
<feature type="modified residue" description="Phosphoserine" evidence="2">
    <location>
        <position position="607"/>
    </location>
</feature>
<feature type="modified residue" description="Phosphoserine" evidence="2">
    <location>
        <position position="620"/>
    </location>
</feature>
<feature type="modified residue" description="Phosphothreonine" evidence="2">
    <location>
        <position position="637"/>
    </location>
</feature>
<feature type="modified residue" description="Phosphoserine" evidence="2">
    <location>
        <position position="680"/>
    </location>
</feature>
<feature type="modified residue" description="Phosphoserine" evidence="2">
    <location>
        <position position="774"/>
    </location>
</feature>
<feature type="glycosylation site" description="N-linked (GlcNAc...) asparagine" evidence="3">
    <location>
        <position position="46"/>
    </location>
</feature>
<feature type="glycosylation site" description="N-linked (GlcNAc...) asparagine" evidence="3">
    <location>
        <position position="127"/>
    </location>
</feature>
<feature type="glycosylation site" description="N-linked (GlcNAc...) asparagine" evidence="3">
    <location>
        <position position="229"/>
    </location>
</feature>
<feature type="glycosylation site" description="N-linked (GlcNAc...) asparagine" evidence="3">
    <location>
        <position position="313"/>
    </location>
</feature>
<feature type="glycosylation site" description="N-linked (GlcNAc...) asparagine" evidence="3">
    <location>
        <position position="329"/>
    </location>
</feature>
<feature type="glycosylation site" description="N-linked (GlcNAc...) asparagine" evidence="3">
    <location>
        <position position="368"/>
    </location>
</feature>
<feature type="disulfide bond" evidence="1">
    <location>
        <begin position="275"/>
        <end position="287"/>
    </location>
</feature>
<feature type="disulfide bond" evidence="1">
    <location>
        <begin position="281"/>
        <end position="295"/>
    </location>
</feature>
<feature type="disulfide bond" evidence="1">
    <location>
        <begin position="361"/>
        <end position="382"/>
    </location>
</feature>
<feature type="disulfide bond" evidence="1">
    <location>
        <begin position="365"/>
        <end position="371"/>
    </location>
</feature>
<organism>
    <name type="scientific">Arabidopsis thaliana</name>
    <name type="common">Mouse-ear cress</name>
    <dbReference type="NCBI Taxonomy" id="3702"/>
    <lineage>
        <taxon>Eukaryota</taxon>
        <taxon>Viridiplantae</taxon>
        <taxon>Streptophyta</taxon>
        <taxon>Embryophyta</taxon>
        <taxon>Tracheophyta</taxon>
        <taxon>Spermatophyta</taxon>
        <taxon>Magnoliopsida</taxon>
        <taxon>eudicotyledons</taxon>
        <taxon>Gunneridae</taxon>
        <taxon>Pentapetalae</taxon>
        <taxon>rosids</taxon>
        <taxon>malvids</taxon>
        <taxon>Brassicales</taxon>
        <taxon>Brassicaceae</taxon>
        <taxon>Camelineae</taxon>
        <taxon>Arabidopsis</taxon>
    </lineage>
</organism>
<proteinExistence type="inferred from homology"/>
<accession>O64776</accession>
<gene>
    <name type="ordered locus">At1g61440</name>
    <name type="ORF">T1F9.7</name>
</gene>
<name>Y1144_ARATH</name>